<evidence type="ECO:0000255" key="1">
    <source>
        <dbReference type="PROSITE-ProRule" id="PRU00441"/>
    </source>
</evidence>
<evidence type="ECO:0000305" key="2"/>
<organism>
    <name type="scientific">Haemophilus influenzae (strain ATCC 51907 / DSM 11121 / KW20 / Rd)</name>
    <dbReference type="NCBI Taxonomy" id="71421"/>
    <lineage>
        <taxon>Bacteria</taxon>
        <taxon>Pseudomonadati</taxon>
        <taxon>Pseudomonadota</taxon>
        <taxon>Gammaproteobacteria</taxon>
        <taxon>Pasteurellales</taxon>
        <taxon>Pasteurellaceae</taxon>
        <taxon>Haemophilus</taxon>
    </lineage>
</organism>
<gene>
    <name type="ordered locus">HI_1475</name>
</gene>
<name>Y1475_HAEIN</name>
<keyword id="KW-1003">Cell membrane</keyword>
<keyword id="KW-0472">Membrane</keyword>
<keyword id="KW-1185">Reference proteome</keyword>
<keyword id="KW-0812">Transmembrane</keyword>
<keyword id="KW-1133">Transmembrane helix</keyword>
<keyword id="KW-0813">Transport</keyword>
<protein>
    <recommendedName>
        <fullName>Putative uncharacterized protein HI_1475</fullName>
    </recommendedName>
</protein>
<reference key="1">
    <citation type="journal article" date="1995" name="Science">
        <title>Whole-genome random sequencing and assembly of Haemophilus influenzae Rd.</title>
        <authorList>
            <person name="Fleischmann R.D."/>
            <person name="Adams M.D."/>
            <person name="White O."/>
            <person name="Clayton R.A."/>
            <person name="Kirkness E.F."/>
            <person name="Kerlavage A.R."/>
            <person name="Bult C.J."/>
            <person name="Tomb J.-F."/>
            <person name="Dougherty B.A."/>
            <person name="Merrick J.M."/>
            <person name="McKenney K."/>
            <person name="Sutton G.G."/>
            <person name="FitzHugh W."/>
            <person name="Fields C.A."/>
            <person name="Gocayne J.D."/>
            <person name="Scott J.D."/>
            <person name="Shirley R."/>
            <person name="Liu L.-I."/>
            <person name="Glodek A."/>
            <person name="Kelley J.M."/>
            <person name="Weidman J.F."/>
            <person name="Phillips C.A."/>
            <person name="Spriggs T."/>
            <person name="Hedblom E."/>
            <person name="Cotton M.D."/>
            <person name="Utterback T.R."/>
            <person name="Hanna M.C."/>
            <person name="Nguyen D.T."/>
            <person name="Saudek D.M."/>
            <person name="Brandon R.C."/>
            <person name="Fine L.D."/>
            <person name="Fritchman J.L."/>
            <person name="Fuhrmann J.L."/>
            <person name="Geoghagen N.S.M."/>
            <person name="Gnehm C.L."/>
            <person name="McDonald L.A."/>
            <person name="Small K.V."/>
            <person name="Fraser C.M."/>
            <person name="Smith H.O."/>
            <person name="Venter J.C."/>
        </authorList>
    </citation>
    <scope>NUCLEOTIDE SEQUENCE [LARGE SCALE GENOMIC DNA]</scope>
    <source>
        <strain>ATCC 51907 / DSM 11121 / KW20 / Rd</strain>
    </source>
</reference>
<accession>Q57380</accession>
<accession>O05068</accession>
<sequence>MVFNMRSTRGIFSSFESGYRFASYTLELSPFKTLIKIEIPMCWKPLVCASVLAWSRAIGEFGATLMLAGATRFKTETLPMAVYLNISSGDFEIAIGASLWLLFISSCLLLVLRMINRAV</sequence>
<dbReference type="EMBL" id="L42023">
    <property type="protein sequence ID" value="AAC23128.1"/>
    <property type="molecule type" value="Genomic_DNA"/>
</dbReference>
<dbReference type="PIR" id="A64126">
    <property type="entry name" value="A64126"/>
</dbReference>
<dbReference type="RefSeq" id="NP_439626.1">
    <property type="nucleotide sequence ID" value="NC_000907.1"/>
</dbReference>
<dbReference type="SMR" id="Q57380"/>
<dbReference type="STRING" id="71421.HI_1475"/>
<dbReference type="EnsemblBacteria" id="AAC23128">
    <property type="protein sequence ID" value="AAC23128"/>
    <property type="gene ID" value="HI_1475"/>
</dbReference>
<dbReference type="KEGG" id="hin:HI_1475"/>
<dbReference type="PATRIC" id="fig|71421.8.peg.1542"/>
<dbReference type="eggNOG" id="COG0555">
    <property type="taxonomic scope" value="Bacteria"/>
</dbReference>
<dbReference type="HOGENOM" id="CLU_016047_14_5_6"/>
<dbReference type="OrthoDB" id="9774448at2"/>
<dbReference type="PhylomeDB" id="Q57380"/>
<dbReference type="BioCyc" id="HINF71421:G1GJ1-1500-MONOMER"/>
<dbReference type="Proteomes" id="UP000000579">
    <property type="component" value="Chromosome"/>
</dbReference>
<dbReference type="GO" id="GO:0005886">
    <property type="term" value="C:plasma membrane"/>
    <property type="evidence" value="ECO:0000318"/>
    <property type="project" value="GO_Central"/>
</dbReference>
<dbReference type="GO" id="GO:0055085">
    <property type="term" value="P:transmembrane transport"/>
    <property type="evidence" value="ECO:0007669"/>
    <property type="project" value="InterPro"/>
</dbReference>
<dbReference type="CDD" id="cd06261">
    <property type="entry name" value="TM_PBP2"/>
    <property type="match status" value="1"/>
</dbReference>
<dbReference type="Gene3D" id="1.10.3720.10">
    <property type="entry name" value="MetI-like"/>
    <property type="match status" value="1"/>
</dbReference>
<dbReference type="InterPro" id="IPR000515">
    <property type="entry name" value="MetI-like"/>
</dbReference>
<dbReference type="InterPro" id="IPR035906">
    <property type="entry name" value="MetI-like_sf"/>
</dbReference>
<dbReference type="PANTHER" id="PTHR30183">
    <property type="entry name" value="MOLYBDENUM TRANSPORT SYSTEM PERMEASE PROTEIN MODB"/>
    <property type="match status" value="1"/>
</dbReference>
<dbReference type="PANTHER" id="PTHR30183:SF3">
    <property type="entry name" value="MOLYBDENUM TRANSPORT SYSTEM PERMEASE PROTEIN MODB"/>
    <property type="match status" value="1"/>
</dbReference>
<dbReference type="Pfam" id="PF00528">
    <property type="entry name" value="BPD_transp_1"/>
    <property type="match status" value="1"/>
</dbReference>
<dbReference type="SUPFAM" id="SSF161098">
    <property type="entry name" value="MetI-like"/>
    <property type="match status" value="1"/>
</dbReference>
<dbReference type="PROSITE" id="PS50928">
    <property type="entry name" value="ABC_TM1"/>
    <property type="match status" value="1"/>
</dbReference>
<proteinExistence type="uncertain"/>
<feature type="chain" id="PRO_0000060282" description="Putative uncharacterized protein HI_1475">
    <location>
        <begin position="1"/>
        <end position="119"/>
    </location>
</feature>
<feature type="transmembrane region" description="Helical" evidence="1">
    <location>
        <begin position="51"/>
        <end position="73"/>
    </location>
</feature>
<feature type="transmembrane region" description="Helical" evidence="1">
    <location>
        <begin position="91"/>
        <end position="111"/>
    </location>
</feature>
<feature type="domain" description="ABC transmembrane type-1" evidence="1">
    <location>
        <begin position="1"/>
        <end position="112"/>
    </location>
</feature>
<comment type="subcellular location">
    <subcellularLocation>
        <location evidence="2">Cell membrane</location>
        <topology evidence="1">Multi-pass membrane protein</topology>
    </subcellularLocation>
</comment>
<comment type="similarity">
    <text evidence="2">Belongs to the binding-protein-dependent transport system permease family. CysTW subfamily.</text>
</comment>
<comment type="caution">
    <text evidence="2">Could be the product of a pseudogene.</text>
</comment>